<keyword id="KW-1003">Cell membrane</keyword>
<keyword id="KW-0186">Copper</keyword>
<keyword id="KW-0903">Direct protein sequencing</keyword>
<keyword id="KW-0249">Electron transport</keyword>
<keyword id="KW-0349">Heme</keyword>
<keyword id="KW-0408">Iron</keyword>
<keyword id="KW-0472">Membrane</keyword>
<keyword id="KW-0479">Metal-binding</keyword>
<keyword id="KW-0679">Respiratory chain</keyword>
<keyword id="KW-1278">Translocase</keyword>
<keyword id="KW-0812">Transmembrane</keyword>
<keyword id="KW-1133">Transmembrane helix</keyword>
<keyword id="KW-0813">Transport</keyword>
<reference key="1">
    <citation type="journal article" date="1990" name="J. Biochem.">
        <title>Nucleotide sequence of the gene coding for four subunits of cytochrome c oxidase from the thermophilic bacterium PS3.</title>
        <authorList>
            <person name="Ishizuka M."/>
            <person name="Machida K."/>
            <person name="Shimada S."/>
            <person name="Mogi A."/>
            <person name="Tsuchiya T."/>
            <person name="Ohmori T."/>
            <person name="Souma Y."/>
            <person name="Gonda M."/>
            <person name="Sone N."/>
        </authorList>
    </citation>
    <scope>NUCLEOTIDE SEQUENCE [GENOMIC DNA]</scope>
    <scope>PROTEIN SEQUENCE OF 2-31</scope>
</reference>
<reference key="2">
    <citation type="journal article" date="1988" name="J. Biochem.">
        <title>Nucleotide sequence of the gene coding for cytochrome oxidase subunit I from the thermophilic bacterium PS3.</title>
        <authorList>
            <person name="Sone N."/>
            <person name="Yokoi F."/>
            <person name="Fu T."/>
            <person name="Ohta S."/>
            <person name="Metso T."/>
            <person name="Raitio M."/>
            <person name="Saraste M."/>
        </authorList>
    </citation>
    <scope>NUCLEOTIDE SEQUENCE [GENOMIC DNA] OF 1-552</scope>
    <scope>PROTEIN SEQUENCE OF 2-15</scope>
</reference>
<reference key="3">
    <citation type="journal article" date="1991" name="FEBS Lett.">
        <title>Haem O2 can replace haem A in the active site of cytochrome c oxidase from thermophilic bacterium PS3.</title>
        <authorList>
            <person name="Sone N."/>
            <person name="Fujiwara Y."/>
        </authorList>
    </citation>
    <scope>CHARACTERIZATION</scope>
</reference>
<accession>P16262</accession>
<accession>Q56248</accession>
<dbReference type="EC" id="7.1.1.9"/>
<dbReference type="EMBL" id="D13955">
    <property type="protein sequence ID" value="BAA03046.1"/>
    <property type="molecule type" value="Genomic_DNA"/>
</dbReference>
<dbReference type="EMBL" id="D11038">
    <property type="protein sequence ID" value="BAA01793.1"/>
    <property type="status" value="ALT_FRAME"/>
    <property type="molecule type" value="Genomic_DNA"/>
</dbReference>
<dbReference type="PIR" id="JX0140">
    <property type="entry name" value="JX0140"/>
</dbReference>
<dbReference type="SMR" id="P16262"/>
<dbReference type="UniPathway" id="UPA00705"/>
<dbReference type="GO" id="GO:0005886">
    <property type="term" value="C:plasma membrane"/>
    <property type="evidence" value="ECO:0007669"/>
    <property type="project" value="UniProtKB-SubCell"/>
</dbReference>
<dbReference type="GO" id="GO:0004129">
    <property type="term" value="F:cytochrome-c oxidase activity"/>
    <property type="evidence" value="ECO:0007669"/>
    <property type="project" value="UniProtKB-EC"/>
</dbReference>
<dbReference type="GO" id="GO:0020037">
    <property type="term" value="F:heme binding"/>
    <property type="evidence" value="ECO:0007669"/>
    <property type="project" value="InterPro"/>
</dbReference>
<dbReference type="GO" id="GO:0046872">
    <property type="term" value="F:metal ion binding"/>
    <property type="evidence" value="ECO:0007669"/>
    <property type="project" value="UniProtKB-KW"/>
</dbReference>
<dbReference type="GO" id="GO:0015990">
    <property type="term" value="P:electron transport coupled proton transport"/>
    <property type="evidence" value="ECO:0007669"/>
    <property type="project" value="InterPro"/>
</dbReference>
<dbReference type="GO" id="GO:0006119">
    <property type="term" value="P:oxidative phosphorylation"/>
    <property type="evidence" value="ECO:0007669"/>
    <property type="project" value="UniProtKB-UniPathway"/>
</dbReference>
<dbReference type="GO" id="GO:0022904">
    <property type="term" value="P:respiratory electron transport chain"/>
    <property type="evidence" value="ECO:0007669"/>
    <property type="project" value="TreeGrafter"/>
</dbReference>
<dbReference type="CDD" id="cd01662">
    <property type="entry name" value="Ubiquinol_Oxidase_I"/>
    <property type="match status" value="1"/>
</dbReference>
<dbReference type="FunFam" id="1.10.287.70:FF:000114">
    <property type="entry name" value="Cytochrome c oxidase subunit 1"/>
    <property type="match status" value="1"/>
</dbReference>
<dbReference type="FunFam" id="1.20.210.10:FF:000006">
    <property type="entry name" value="Cytochrome c oxidase subunit 1"/>
    <property type="match status" value="1"/>
</dbReference>
<dbReference type="Gene3D" id="1.10.287.70">
    <property type="match status" value="1"/>
</dbReference>
<dbReference type="Gene3D" id="1.20.210.10">
    <property type="entry name" value="Cytochrome c oxidase-like, subunit I domain"/>
    <property type="match status" value="1"/>
</dbReference>
<dbReference type="InterPro" id="IPR023616">
    <property type="entry name" value="Cyt_c_oxase-like_su1_dom"/>
</dbReference>
<dbReference type="InterPro" id="IPR036927">
    <property type="entry name" value="Cyt_c_oxase-like_su1_sf"/>
</dbReference>
<dbReference type="InterPro" id="IPR000883">
    <property type="entry name" value="Cyt_C_Oxase_1"/>
</dbReference>
<dbReference type="InterPro" id="IPR023615">
    <property type="entry name" value="Cyt_c_Oxase_su1_BS"/>
</dbReference>
<dbReference type="InterPro" id="IPR014241">
    <property type="entry name" value="Cyt_c_oxidase_su1_bac"/>
</dbReference>
<dbReference type="NCBIfam" id="TIGR02891">
    <property type="entry name" value="CtaD_CoxA"/>
    <property type="match status" value="1"/>
</dbReference>
<dbReference type="PANTHER" id="PTHR10422">
    <property type="entry name" value="CYTOCHROME C OXIDASE SUBUNIT 1"/>
    <property type="match status" value="1"/>
</dbReference>
<dbReference type="PANTHER" id="PTHR10422:SF44">
    <property type="entry name" value="CYTOCHROME C OXIDASE SUBUNIT 1"/>
    <property type="match status" value="1"/>
</dbReference>
<dbReference type="Pfam" id="PF00115">
    <property type="entry name" value="COX1"/>
    <property type="match status" value="1"/>
</dbReference>
<dbReference type="PRINTS" id="PR01165">
    <property type="entry name" value="CYCOXIDASEI"/>
</dbReference>
<dbReference type="SUPFAM" id="SSF81442">
    <property type="entry name" value="Cytochrome c oxidase subunit I-like"/>
    <property type="match status" value="1"/>
</dbReference>
<dbReference type="PROSITE" id="PS50855">
    <property type="entry name" value="COX1"/>
    <property type="match status" value="1"/>
</dbReference>
<dbReference type="PROSITE" id="PS00077">
    <property type="entry name" value="COX1_CUB"/>
    <property type="match status" value="1"/>
</dbReference>
<comment type="function">
    <text>Cytochrome c oxidase is the component of the respiratory chain that catalyzes the reduction of oxygen to water. Subunits 1-3 form the functional core of the enzyme complex. Co I is the catalytic subunit of the enzyme. Electrons originating in cytochrome c are transferred via the copper A center of subunit 2 and heme a of subunit 1 to the bimetallic center formed by heme a3 and copper B. This cytochrome c oxidase shows proton pump activity across the membrane in addition to the electron transfer.</text>
</comment>
<comment type="catalytic activity">
    <reaction>
        <text>4 Fe(II)-[cytochrome c] + O2 + 8 H(+)(in) = 4 Fe(III)-[cytochrome c] + 2 H2O + 4 H(+)(out)</text>
        <dbReference type="Rhea" id="RHEA:11436"/>
        <dbReference type="Rhea" id="RHEA-COMP:10350"/>
        <dbReference type="Rhea" id="RHEA-COMP:14399"/>
        <dbReference type="ChEBI" id="CHEBI:15377"/>
        <dbReference type="ChEBI" id="CHEBI:15378"/>
        <dbReference type="ChEBI" id="CHEBI:15379"/>
        <dbReference type="ChEBI" id="CHEBI:29033"/>
        <dbReference type="ChEBI" id="CHEBI:29034"/>
        <dbReference type="EC" id="7.1.1.9"/>
    </reaction>
</comment>
<comment type="cofactor">
    <cofactor>
        <name>Cu(2+)</name>
        <dbReference type="ChEBI" id="CHEBI:29036"/>
    </cofactor>
    <text>Binds 1 copper B ion per subunit.</text>
</comment>
<comment type="cofactor">
    <cofactor>
        <name>heme</name>
        <dbReference type="ChEBI" id="CHEBI:30413"/>
    </cofactor>
    <text>Binds 2 heme groups per subunit.</text>
</comment>
<comment type="pathway">
    <text>Energy metabolism; oxidative phosphorylation.</text>
</comment>
<comment type="subcellular location">
    <subcellularLocation>
        <location>Cell membrane</location>
        <topology>Multi-pass membrane protein</topology>
    </subcellularLocation>
</comment>
<comment type="miscellaneous">
    <text>Under slightly air-limited conditions, the cytochrome a3 center of the enzyme is replaced by cytochrome o.</text>
</comment>
<comment type="miscellaneous">
    <text>This cytochrome c oxidase shows clear proton pump activity in addition to electron transfer across the membrane.</text>
</comment>
<comment type="similarity">
    <text evidence="5">Belongs to the heme-copper respiratory oxidase family.</text>
</comment>
<comment type="sequence caution" evidence="5">
    <conflict type="frameshift">
        <sequence resource="EMBL-CDS" id="BAA01793"/>
    </conflict>
</comment>
<gene>
    <name type="primary">ctaD</name>
    <name type="synonym">caaB</name>
    <name type="synonym">coi</name>
</gene>
<sequence length="616" mass="68294">MSTIARKKGVGAVLWDYLTTVDHKKIAHLYLISGGFFFLLGGLEALFIRIQLAKPNNDFLVGGLYNEVLTMHGTTMIFLAAMPLVFAFMNAVVPLQIGARDVAFPFLNALGFWMFFFGGLFLNCSWFLGGAPDAGWTSYASLSLDSKAHHGIDFYTLGLQISGFGTIMGAINFLVTIINMRAPGMTFMRMPMFTWATFVTSALILFAFPPLTVGLIFMMMDRLFGGNFFNPAAGGNTIIWEHLFWVFGHPEVYILVLPAFGIFSEIFATFSRKRLFGYSSMVFATVLIAFLGFMVWAHHMFTVGMGPIANAIFAVATMTIAVPTGVKIFNWLFTMWGGSIKFTTPMHYAVAFIPSFVMGGVTGVMLASAAADYQYHDSYFVVAHFHYVIVGGVVFALLAGTHYWWPKMFGRMLNETLGKITFWLFFIGFHLTFFIQHFLGLTGMPRRVFTYLPHQGWETGNLISTIGAFFIAAATVILLINIVVTTAKGEKVPGDAWGDGRTLEWAIASPPPVYNFAQTPLVRGLDAFWLEKMEGKKELTPAEPLGDIHMPNSSFLPFVIAFGLFVAAFGFTYHNDAGWGLPVAILGLLITLGSMFLRSVIDDHGFHIHKEEVLEL</sequence>
<proteinExistence type="evidence at protein level"/>
<evidence type="ECO:0000250" key="1"/>
<evidence type="ECO:0000255" key="2"/>
<evidence type="ECO:0000269" key="3">
    <source>
    </source>
</evidence>
<evidence type="ECO:0000269" key="4">
    <source>
    </source>
</evidence>
<evidence type="ECO:0000305" key="5"/>
<feature type="initiator methionine" description="Removed" evidence="3 4">
    <location>
        <position position="1"/>
    </location>
</feature>
<feature type="chain" id="PRO_0000183435" description="Cytochrome c oxidase subunit 1">
    <location>
        <begin position="2"/>
        <end position="616"/>
    </location>
</feature>
<feature type="transmembrane region" description="Helical" evidence="2">
    <location>
        <begin position="28"/>
        <end position="48"/>
    </location>
</feature>
<feature type="transmembrane region" description="Helical" evidence="2">
    <location>
        <begin position="75"/>
        <end position="95"/>
    </location>
</feature>
<feature type="transmembrane region" description="Helical" evidence="2">
    <location>
        <begin position="102"/>
        <end position="122"/>
    </location>
</feature>
<feature type="transmembrane region" description="Helical" evidence="2">
    <location>
        <begin position="158"/>
        <end position="178"/>
    </location>
</feature>
<feature type="transmembrane region" description="Helical" evidence="2">
    <location>
        <begin position="198"/>
        <end position="218"/>
    </location>
</feature>
<feature type="transmembrane region" description="Helical" evidence="2">
    <location>
        <begin position="243"/>
        <end position="263"/>
    </location>
</feature>
<feature type="transmembrane region" description="Helical" evidence="2">
    <location>
        <begin position="275"/>
        <end position="295"/>
    </location>
</feature>
<feature type="transmembrane region" description="Helical" evidence="2">
    <location>
        <begin position="303"/>
        <end position="323"/>
    </location>
</feature>
<feature type="transmembrane region" description="Helical" evidence="2">
    <location>
        <begin position="349"/>
        <end position="369"/>
    </location>
</feature>
<feature type="transmembrane region" description="Helical" evidence="2">
    <location>
        <begin position="380"/>
        <end position="400"/>
    </location>
</feature>
<feature type="transmembrane region" description="Helical" evidence="2">
    <location>
        <begin position="420"/>
        <end position="440"/>
    </location>
</feature>
<feature type="transmembrane region" description="Helical" evidence="2">
    <location>
        <begin position="463"/>
        <end position="483"/>
    </location>
</feature>
<feature type="transmembrane region" description="Helical" evidence="2">
    <location>
        <begin position="553"/>
        <end position="573"/>
    </location>
</feature>
<feature type="transmembrane region" description="Helical" evidence="2">
    <location>
        <begin position="577"/>
        <end position="597"/>
    </location>
</feature>
<feature type="binding site" description="axial binding residue" evidence="5">
    <location>
        <position position="72"/>
    </location>
    <ligand>
        <name>Fe(II)-heme a</name>
        <dbReference type="ChEBI" id="CHEBI:61715"/>
    </ligand>
    <ligandPart>
        <name>Fe</name>
        <dbReference type="ChEBI" id="CHEBI:18248"/>
    </ligandPart>
</feature>
<feature type="binding site" evidence="5">
    <location>
        <position position="249"/>
    </location>
    <ligand>
        <name>Cu cation</name>
        <dbReference type="ChEBI" id="CHEBI:23378"/>
        <label>B</label>
    </ligand>
</feature>
<feature type="binding site" evidence="5">
    <location>
        <position position="253"/>
    </location>
    <ligand>
        <name>Cu cation</name>
        <dbReference type="ChEBI" id="CHEBI:23378"/>
        <label>B</label>
    </ligand>
</feature>
<feature type="binding site" evidence="5">
    <location>
        <position position="298"/>
    </location>
    <ligand>
        <name>Cu cation</name>
        <dbReference type="ChEBI" id="CHEBI:23378"/>
        <label>B</label>
    </ligand>
</feature>
<feature type="binding site" evidence="5">
    <location>
        <position position="299"/>
    </location>
    <ligand>
        <name>Cu cation</name>
        <dbReference type="ChEBI" id="CHEBI:23378"/>
        <label>B</label>
    </ligand>
</feature>
<feature type="binding site" description="axial binding residue" evidence="5">
    <location>
        <position position="384"/>
    </location>
    <ligand>
        <name>Fe(II)-heme o</name>
        <dbReference type="ChEBI" id="CHEBI:60530"/>
    </ligand>
    <ligandPart>
        <name>Fe</name>
        <dbReference type="ChEBI" id="CHEBI:18248"/>
    </ligandPart>
</feature>
<feature type="binding site" description="axial binding residue" evidence="5">
    <location>
        <position position="384"/>
    </location>
    <ligand>
        <name>heme a3</name>
        <dbReference type="ChEBI" id="CHEBI:83282"/>
    </ligand>
    <ligandPart>
        <name>Fe</name>
        <dbReference type="ChEBI" id="CHEBI:18248"/>
    </ligandPart>
</feature>
<feature type="binding site" description="axial binding residue" evidence="5">
    <location>
        <position position="386"/>
    </location>
    <ligand>
        <name>Fe(II)-heme a</name>
        <dbReference type="ChEBI" id="CHEBI:61715"/>
    </ligand>
    <ligandPart>
        <name>Fe</name>
        <dbReference type="ChEBI" id="CHEBI:18248"/>
    </ligandPart>
</feature>
<feature type="cross-link" description="1'-histidyl-3'-tyrosine (His-Tyr)" evidence="1">
    <location>
        <begin position="249"/>
        <end position="253"/>
    </location>
</feature>
<feature type="sequence conflict" description="In Ref. 2; BAA01793." evidence="5" ref="2">
    <original>V</original>
    <variation>W</variation>
    <location>
        <position position="448"/>
    </location>
</feature>
<feature type="sequence conflict" description="In Ref. 2; BAA01793." evidence="5" ref="2">
    <original>F</original>
    <variation>I</variation>
    <location>
        <position position="470"/>
    </location>
</feature>
<feature type="sequence conflict" description="In Ref. 2; BAA01793." evidence="5" ref="2">
    <original>AIA</original>
    <variation>RS</variation>
    <location>
        <begin position="506"/>
        <end position="508"/>
    </location>
</feature>
<feature type="sequence conflict" description="In Ref. 2; AA sequence." evidence="5" ref="2">
    <original>LD</original>
    <variation>WT</variation>
    <location>
        <begin position="525"/>
        <end position="526"/>
    </location>
</feature>
<feature type="sequence conflict" description="In Ref. 2; AA sequence." evidence="5" ref="2">
    <location>
        <position position="549"/>
    </location>
</feature>
<name>COX1_BACP3</name>
<protein>
    <recommendedName>
        <fullName>Cytochrome c oxidase subunit 1</fullName>
        <ecNumber>7.1.1.9</ecNumber>
    </recommendedName>
    <alternativeName>
        <fullName>Cytochrome aa3 subunit 1</fullName>
    </alternativeName>
    <alternativeName>
        <fullName>Cytochrome c oxidase polypeptide I</fullName>
    </alternativeName>
</protein>
<organism>
    <name type="scientific">Bacillus sp. (strain PS3)</name>
    <dbReference type="NCBI Taxonomy" id="2334"/>
    <lineage>
        <taxon>Bacteria</taxon>
        <taxon>Bacillati</taxon>
        <taxon>Bacillota</taxon>
        <taxon>Bacilli</taxon>
        <taxon>Bacillales</taxon>
        <taxon>Bacillaceae</taxon>
        <taxon>Bacillus</taxon>
    </lineage>
</organism>